<name>BGAL_PSEHA</name>
<proteinExistence type="evidence at protein level"/>
<accession>P81650</accession>
<accession>Q9ZEM8</accession>
<gene>
    <name type="primary">lacZ</name>
</gene>
<keyword id="KW-0903">Direct protein sequencing</keyword>
<keyword id="KW-0326">Glycosidase</keyword>
<keyword id="KW-0378">Hydrolase</keyword>
<keyword id="KW-0460">Magnesium</keyword>
<keyword id="KW-0479">Metal-binding</keyword>
<keyword id="KW-0915">Sodium</keyword>
<dbReference type="EC" id="3.2.1.23"/>
<dbReference type="EMBL" id="AJ131635">
    <property type="protein sequence ID" value="CAA10470.1"/>
    <property type="molecule type" value="Genomic_DNA"/>
</dbReference>
<dbReference type="SMR" id="P81650"/>
<dbReference type="CAZy" id="GH2">
    <property type="family name" value="Glycoside Hydrolase Family 2"/>
</dbReference>
<dbReference type="eggNOG" id="COG3250">
    <property type="taxonomic scope" value="Bacteria"/>
</dbReference>
<dbReference type="BRENDA" id="3.2.1.23">
    <property type="organism ID" value="5081"/>
</dbReference>
<dbReference type="GO" id="GO:0009341">
    <property type="term" value="C:beta-galactosidase complex"/>
    <property type="evidence" value="ECO:0007669"/>
    <property type="project" value="InterPro"/>
</dbReference>
<dbReference type="GO" id="GO:0004565">
    <property type="term" value="F:beta-galactosidase activity"/>
    <property type="evidence" value="ECO:0007669"/>
    <property type="project" value="UniProtKB-EC"/>
</dbReference>
<dbReference type="GO" id="GO:0030246">
    <property type="term" value="F:carbohydrate binding"/>
    <property type="evidence" value="ECO:0007669"/>
    <property type="project" value="InterPro"/>
</dbReference>
<dbReference type="GO" id="GO:0000287">
    <property type="term" value="F:magnesium ion binding"/>
    <property type="evidence" value="ECO:0007669"/>
    <property type="project" value="UniProtKB-UniRule"/>
</dbReference>
<dbReference type="GO" id="GO:0005990">
    <property type="term" value="P:lactose catabolic process"/>
    <property type="evidence" value="ECO:0007669"/>
    <property type="project" value="TreeGrafter"/>
</dbReference>
<dbReference type="FunFam" id="3.20.20.80:FF:000018">
    <property type="entry name" value="Beta-galactosidase"/>
    <property type="match status" value="1"/>
</dbReference>
<dbReference type="Gene3D" id="2.70.98.10">
    <property type="match status" value="1"/>
</dbReference>
<dbReference type="Gene3D" id="2.60.120.260">
    <property type="entry name" value="Galactose-binding domain-like"/>
    <property type="match status" value="1"/>
</dbReference>
<dbReference type="Gene3D" id="3.20.20.80">
    <property type="entry name" value="Glycosidases"/>
    <property type="match status" value="1"/>
</dbReference>
<dbReference type="Gene3D" id="2.60.40.10">
    <property type="entry name" value="Immunoglobulins"/>
    <property type="match status" value="2"/>
</dbReference>
<dbReference type="HAMAP" id="MF_01687">
    <property type="entry name" value="Beta_gal"/>
    <property type="match status" value="1"/>
</dbReference>
<dbReference type="InterPro" id="IPR004199">
    <property type="entry name" value="B-gal_small/dom_5"/>
</dbReference>
<dbReference type="InterPro" id="IPR050347">
    <property type="entry name" value="Bact_Beta-galactosidase"/>
</dbReference>
<dbReference type="InterPro" id="IPR036156">
    <property type="entry name" value="Beta-gal/glucu_dom_sf"/>
</dbReference>
<dbReference type="InterPro" id="IPR011013">
    <property type="entry name" value="Gal_mutarotase_sf_dom"/>
</dbReference>
<dbReference type="InterPro" id="IPR008979">
    <property type="entry name" value="Galactose-bd-like_sf"/>
</dbReference>
<dbReference type="InterPro" id="IPR014718">
    <property type="entry name" value="GH-type_carb-bd"/>
</dbReference>
<dbReference type="InterPro" id="IPR006101">
    <property type="entry name" value="Glyco_hydro_2"/>
</dbReference>
<dbReference type="InterPro" id="IPR023232">
    <property type="entry name" value="Glyco_hydro_2_AS"/>
</dbReference>
<dbReference type="InterPro" id="IPR023933">
    <property type="entry name" value="Glyco_hydro_2_beta_Galsidase"/>
</dbReference>
<dbReference type="InterPro" id="IPR006103">
    <property type="entry name" value="Glyco_hydro_2_cat"/>
</dbReference>
<dbReference type="InterPro" id="IPR023230">
    <property type="entry name" value="Glyco_hydro_2_CS"/>
</dbReference>
<dbReference type="InterPro" id="IPR006102">
    <property type="entry name" value="Glyco_hydro_2_Ig-like"/>
</dbReference>
<dbReference type="InterPro" id="IPR006104">
    <property type="entry name" value="Glyco_hydro_2_N"/>
</dbReference>
<dbReference type="InterPro" id="IPR017853">
    <property type="entry name" value="Glycoside_hydrolase_SF"/>
</dbReference>
<dbReference type="InterPro" id="IPR013783">
    <property type="entry name" value="Ig-like_fold"/>
</dbReference>
<dbReference type="InterPro" id="IPR032312">
    <property type="entry name" value="LacZ_4"/>
</dbReference>
<dbReference type="NCBIfam" id="NF007074">
    <property type="entry name" value="PRK09525.1"/>
    <property type="match status" value="1"/>
</dbReference>
<dbReference type="PANTHER" id="PTHR46323">
    <property type="entry name" value="BETA-GALACTOSIDASE"/>
    <property type="match status" value="1"/>
</dbReference>
<dbReference type="PANTHER" id="PTHR46323:SF2">
    <property type="entry name" value="BETA-GALACTOSIDASE"/>
    <property type="match status" value="1"/>
</dbReference>
<dbReference type="Pfam" id="PF02929">
    <property type="entry name" value="Bgal_small_N"/>
    <property type="match status" value="1"/>
</dbReference>
<dbReference type="Pfam" id="PF00703">
    <property type="entry name" value="Glyco_hydro_2"/>
    <property type="match status" value="1"/>
</dbReference>
<dbReference type="Pfam" id="PF02836">
    <property type="entry name" value="Glyco_hydro_2_C"/>
    <property type="match status" value="1"/>
</dbReference>
<dbReference type="Pfam" id="PF02837">
    <property type="entry name" value="Glyco_hydro_2_N"/>
    <property type="match status" value="1"/>
</dbReference>
<dbReference type="Pfam" id="PF16353">
    <property type="entry name" value="LacZ_4"/>
    <property type="match status" value="1"/>
</dbReference>
<dbReference type="PRINTS" id="PR00132">
    <property type="entry name" value="GLHYDRLASE2"/>
</dbReference>
<dbReference type="SMART" id="SM01038">
    <property type="entry name" value="Bgal_small_N"/>
    <property type="match status" value="1"/>
</dbReference>
<dbReference type="SUPFAM" id="SSF51445">
    <property type="entry name" value="(Trans)glycosidases"/>
    <property type="match status" value="1"/>
</dbReference>
<dbReference type="SUPFAM" id="SSF49303">
    <property type="entry name" value="beta-Galactosidase/glucuronidase domain"/>
    <property type="match status" value="2"/>
</dbReference>
<dbReference type="SUPFAM" id="SSF74650">
    <property type="entry name" value="Galactose mutarotase-like"/>
    <property type="match status" value="1"/>
</dbReference>
<dbReference type="SUPFAM" id="SSF49785">
    <property type="entry name" value="Galactose-binding domain-like"/>
    <property type="match status" value="1"/>
</dbReference>
<dbReference type="PROSITE" id="PS00719">
    <property type="entry name" value="GLYCOSYL_HYDROL_F2_1"/>
    <property type="match status" value="1"/>
</dbReference>
<dbReference type="PROSITE" id="PS00608">
    <property type="entry name" value="GLYCOSYL_HYDROL_F2_2"/>
    <property type="match status" value="1"/>
</dbReference>
<reference key="1">
    <citation type="journal article" date="2001" name="Appl. Environ. Microbiol.">
        <title>Cold-adapted beta-galactosidase from the Antarctic psychrophile Pseudoalteromonas haloplanktis.</title>
        <authorList>
            <person name="Hoyoux A."/>
            <person name="Jennes I."/>
            <person name="Dubois P."/>
            <person name="Genicot S."/>
            <person name="Dubail F."/>
            <person name="Francois J.M."/>
            <person name="Baise E."/>
            <person name="Feller G."/>
            <person name="Gerday C."/>
        </authorList>
    </citation>
    <scope>NUCLEOTIDE SEQUENCE [GENOMIC DNA]</scope>
    <scope>PROTEIN SEQUENCE OF 2-20</scope>
    <scope>COFACTOR</scope>
    <scope>SUBUNIT</scope>
    <scope>BIOPHYSICOCHEMICAL PROPERTIES</scope>
    <source>
        <strain>TAE 79</strain>
    </source>
</reference>
<organism>
    <name type="scientific">Pseudoalteromonas haloplanktis</name>
    <name type="common">Alteromonas haloplanktis</name>
    <dbReference type="NCBI Taxonomy" id="228"/>
    <lineage>
        <taxon>Bacteria</taxon>
        <taxon>Pseudomonadati</taxon>
        <taxon>Pseudomonadota</taxon>
        <taxon>Gammaproteobacteria</taxon>
        <taxon>Alteromonadales</taxon>
        <taxon>Pseudoalteromonadaceae</taxon>
        <taxon>Pseudoalteromonas</taxon>
    </lineage>
</organism>
<protein>
    <recommendedName>
        <fullName>Beta-galactosidase</fullName>
        <shortName>Beta-gal</shortName>
        <ecNumber>3.2.1.23</ecNumber>
    </recommendedName>
    <alternativeName>
        <fullName>Beta-D-galactoside galactohydrolase</fullName>
    </alternativeName>
    <alternativeName>
        <fullName>Lactase</fullName>
    </alternativeName>
</protein>
<evidence type="ECO:0000250" key="1"/>
<evidence type="ECO:0000269" key="2">
    <source>
    </source>
</evidence>
<evidence type="ECO:0000305" key="3"/>
<evidence type="ECO:0000305" key="4">
    <source>
    </source>
</evidence>
<comment type="catalytic activity">
    <reaction>
        <text>Hydrolysis of terminal non-reducing beta-D-galactose residues in beta-D-galactosides.</text>
        <dbReference type="EC" id="3.2.1.23"/>
    </reaction>
</comment>
<comment type="cofactor">
    <cofactor evidence="4">
        <name>Mg(2+)</name>
        <dbReference type="ChEBI" id="CHEBI:18420"/>
    </cofactor>
    <text evidence="4">Binds 2 magnesium ions per monomer.</text>
</comment>
<comment type="cofactor">
    <cofactor evidence="1">
        <name>Na(+)</name>
        <dbReference type="ChEBI" id="CHEBI:29101"/>
    </cofactor>
    <text evidence="1">Binds 1 sodium ion per monomer.</text>
</comment>
<comment type="activity regulation">
    <text>Inhibited by zinc, copper and nickel ions. Activated by 2-mercaptoethanol and inhibited by EDTA in vitro.</text>
</comment>
<comment type="biophysicochemical properties">
    <kinetics>
        <KM evidence="2">2.4 mM for lactose (at pH 7.5 and at 25 degrees Celsius)</KM>
    </kinetics>
    <phDependence>
        <text evidence="2">Optimum pH is 8.5.</text>
    </phDependence>
    <temperatureDependence>
        <text evidence="2">Optimum temperature is 4 degrees Celsius. It does not grow at temperatures higher than 25 degrees Celsius.</text>
    </temperatureDependence>
</comment>
<comment type="subunit">
    <text evidence="4">Homotetramer.</text>
</comment>
<comment type="biotechnology">
    <text>This cold-adapted beta-galactosidase could be used to hydrolyze lactose in milk and dairy products processed in refrigerated plants. It is in fact superior to the current commercial enzyme from K.marxiamus with respect to lactose removal, especially at low temperatures.</text>
</comment>
<comment type="similarity">
    <text evidence="3">Belongs to the glycosyl hydrolase 2 family.</text>
</comment>
<sequence length="1039" mass="118199">MTSLQHIINRRDWENPITVQVNQVKAHSPLNGFKTIEDARENTQSQKKSLNGQWDFKLFDKPEAVDESLLYEKISKELSGDWQSITVPSNWQLHGFDKPIYCNVKYPFAVNPPFVPSDNPTGCYRTEFTITPEQLTQRNHIIFEGVNSAFHLWCNGQWVGYSQDSRLPSEFDLSELLVVGTNRIAVMVIRWSDGSYLEDQDMWWLSGIFRDVNLLTKPQSQIRDVFITPDLDACYRDATLHIKTAINAPNNYQVAVQIFDGKTSLCEPKIQSTNNKRVDEKGGWSDVVFQTIAIRSPKKWTAETPYLYRCVVSLLDEQGNTVDVEAYNIGFRKVEMLNGQLCVNGKPLLIRGVNRHEHHPENGHAVSTADMIEDIKLMKQNNFNAVRTAHYPNHPLFYELCDELGLYVVDEANIETHGMFPMGRLASDPLWAGAFMSRYTQMVERDKNHASIIIWSLGNECGHGANHDAMYGWSKSFDPSRPVQYEGGGANTTATDIICPMYSRVDTDIKDDAVPKYSIKKWLSLPGETRPLILCEYAHAMGNSLGSFDDYWQAFREYPRLQGGFIWDWVDQGLSKIDENGKHYWAYGGDFGDELNDRQFCINGLLFPDRTPHPSLFEAKYSQQHLQFTLREQNQNQNQNQYSIDVFSDYVFRHTDNEKLVWQLIQNGVCVEQGEMALNIAPQSTHTLTIKTKTAFEHGAQYYLNLDVALINDSHFANANHVMDSEQFKLINSNNLNSKSFASATEKSVISVNETDSHLSIENNTFKLVFNQQSGLIEQWLQDDTQVISSPLVDNFYRAPLDNDIGVSEVDNLDPNAWEARWSRAGIGQWQRTCSSINAVQSSVDVRITCVFNYEFNGVLQAQTQWLYTLNNTGTISLNVDVNLNDTLPPMPRIGLSTTINKQSDTKVNWLGLGPFENYPDRKSAARFGYYSLSLNELYTPYIFPTDNGLRSDCQLLSINNLIVTGAFLFAASEYSQNMLTQAKHTNELIADDCIHVHIDHQHMGVGGDDSWSPSTHKEYLLEQKNYNYSLTLTGGITT</sequence>
<feature type="initiator methionine" description="Removed" evidence="2">
    <location>
        <position position="1"/>
    </location>
</feature>
<feature type="chain" id="PRO_0000057656" description="Beta-galactosidase">
    <location>
        <begin position="2"/>
        <end position="1039"/>
    </location>
</feature>
<feature type="active site" description="Proton donor" evidence="1">
    <location>
        <position position="460"/>
    </location>
</feature>
<feature type="active site" description="Nucleophile" evidence="1">
    <location>
        <position position="536"/>
    </location>
</feature>
<feature type="binding site" evidence="1">
    <location>
        <position position="103"/>
    </location>
    <ligand>
        <name>substrate</name>
    </ligand>
</feature>
<feature type="binding site" evidence="1">
    <location>
        <position position="201"/>
    </location>
    <ligand>
        <name>Na(+)</name>
        <dbReference type="ChEBI" id="CHEBI:29101"/>
    </ligand>
</feature>
<feature type="binding site" evidence="1">
    <location>
        <position position="201"/>
    </location>
    <ligand>
        <name>substrate</name>
    </ligand>
</feature>
<feature type="binding site" evidence="1">
    <location>
        <position position="415"/>
    </location>
    <ligand>
        <name>Mg(2+)</name>
        <dbReference type="ChEBI" id="CHEBI:18420"/>
        <label>1</label>
    </ligand>
</feature>
<feature type="binding site" evidence="1">
    <location>
        <position position="417"/>
    </location>
    <ligand>
        <name>Mg(2+)</name>
        <dbReference type="ChEBI" id="CHEBI:18420"/>
        <label>1</label>
    </ligand>
</feature>
<feature type="binding site" evidence="1">
    <location>
        <position position="460"/>
    </location>
    <ligand>
        <name>Mg(2+)</name>
        <dbReference type="ChEBI" id="CHEBI:18420"/>
        <label>1</label>
    </ligand>
</feature>
<feature type="binding site" evidence="1">
    <location>
        <position position="460"/>
    </location>
    <ligand>
        <name>substrate</name>
    </ligand>
</feature>
<feature type="binding site" evidence="1">
    <location>
        <begin position="536"/>
        <end position="539"/>
    </location>
    <ligand>
        <name>substrate</name>
    </ligand>
</feature>
<feature type="binding site" evidence="1">
    <location>
        <position position="596"/>
    </location>
    <ligand>
        <name>Mg(2+)</name>
        <dbReference type="ChEBI" id="CHEBI:18420"/>
        <label>2</label>
    </ligand>
</feature>
<feature type="binding site" evidence="1">
    <location>
        <position position="600"/>
    </location>
    <ligand>
        <name>Na(+)</name>
        <dbReference type="ChEBI" id="CHEBI:29101"/>
    </ligand>
</feature>
<feature type="binding site" evidence="1">
    <location>
        <position position="603"/>
    </location>
    <ligand>
        <name>Na(+)</name>
        <dbReference type="ChEBI" id="CHEBI:29101"/>
    </ligand>
</feature>
<feature type="binding site" evidence="1">
    <location>
        <position position="603"/>
    </location>
    <ligand>
        <name>substrate</name>
    </ligand>
</feature>
<feature type="binding site" evidence="1">
    <location>
        <position position="1012"/>
    </location>
    <ligand>
        <name>substrate</name>
    </ligand>
</feature>
<feature type="site" description="Transition state stabilizer" evidence="1">
    <location>
        <position position="356"/>
    </location>
</feature>
<feature type="site" description="Transition state stabilizer" evidence="1">
    <location>
        <position position="390"/>
    </location>
</feature>
<feature type="site" description="Important for ensuring that an appropriate proportion of lactose is converted to allolactose" evidence="1">
    <location>
        <position position="1012"/>
    </location>
</feature>